<protein>
    <recommendedName>
        <fullName evidence="1">Nucleotide-binding protein HAPS_0087</fullName>
    </recommendedName>
</protein>
<keyword id="KW-0067">ATP-binding</keyword>
<keyword id="KW-0342">GTP-binding</keyword>
<keyword id="KW-0547">Nucleotide-binding</keyword>
<keyword id="KW-1185">Reference proteome</keyword>
<gene>
    <name type="ordered locus">HAPS_0087</name>
</gene>
<accession>B8F389</accession>
<comment type="function">
    <text evidence="1">Displays ATPase and GTPase activities.</text>
</comment>
<comment type="similarity">
    <text evidence="1">Belongs to the RapZ-like family.</text>
</comment>
<comment type="sequence caution" evidence="2">
    <conflict type="erroneous initiation">
        <sequence resource="EMBL-CDS" id="ACL31791"/>
    </conflict>
</comment>
<reference key="1">
    <citation type="journal article" date="2009" name="J. Bacteriol.">
        <title>Complete genome sequence of Haemophilus parasuis SH0165.</title>
        <authorList>
            <person name="Yue M."/>
            <person name="Yang F."/>
            <person name="Yang J."/>
            <person name="Bei W."/>
            <person name="Cai X."/>
            <person name="Chen L."/>
            <person name="Dong J."/>
            <person name="Zhou R."/>
            <person name="Jin M."/>
            <person name="Jin Q."/>
            <person name="Chen H."/>
        </authorList>
    </citation>
    <scope>NUCLEOTIDE SEQUENCE [LARGE SCALE GENOMIC DNA]</scope>
    <source>
        <strain>SH0165</strain>
    </source>
</reference>
<dbReference type="EMBL" id="CP001321">
    <property type="protein sequence ID" value="ACL31791.1"/>
    <property type="status" value="ALT_INIT"/>
    <property type="molecule type" value="Genomic_DNA"/>
</dbReference>
<dbReference type="SMR" id="B8F389"/>
<dbReference type="STRING" id="557723.HAPS_0087"/>
<dbReference type="KEGG" id="hap:HAPS_0087"/>
<dbReference type="HOGENOM" id="CLU_059558_1_1_6"/>
<dbReference type="Proteomes" id="UP000006743">
    <property type="component" value="Chromosome"/>
</dbReference>
<dbReference type="GO" id="GO:0005524">
    <property type="term" value="F:ATP binding"/>
    <property type="evidence" value="ECO:0007669"/>
    <property type="project" value="UniProtKB-UniRule"/>
</dbReference>
<dbReference type="GO" id="GO:0005525">
    <property type="term" value="F:GTP binding"/>
    <property type="evidence" value="ECO:0007669"/>
    <property type="project" value="UniProtKB-UniRule"/>
</dbReference>
<dbReference type="Gene3D" id="3.40.50.300">
    <property type="entry name" value="P-loop containing nucleotide triphosphate hydrolases"/>
    <property type="match status" value="1"/>
</dbReference>
<dbReference type="HAMAP" id="MF_00636">
    <property type="entry name" value="RapZ_like"/>
    <property type="match status" value="1"/>
</dbReference>
<dbReference type="InterPro" id="IPR027417">
    <property type="entry name" value="P-loop_NTPase"/>
</dbReference>
<dbReference type="InterPro" id="IPR005337">
    <property type="entry name" value="RapZ-like"/>
</dbReference>
<dbReference type="InterPro" id="IPR053930">
    <property type="entry name" value="RapZ-like_N"/>
</dbReference>
<dbReference type="InterPro" id="IPR053931">
    <property type="entry name" value="RapZ_C"/>
</dbReference>
<dbReference type="NCBIfam" id="NF003828">
    <property type="entry name" value="PRK05416.1"/>
    <property type="match status" value="1"/>
</dbReference>
<dbReference type="PANTHER" id="PTHR30448">
    <property type="entry name" value="RNASE ADAPTER PROTEIN RAPZ"/>
    <property type="match status" value="1"/>
</dbReference>
<dbReference type="PANTHER" id="PTHR30448:SF0">
    <property type="entry name" value="RNASE ADAPTER PROTEIN RAPZ"/>
    <property type="match status" value="1"/>
</dbReference>
<dbReference type="Pfam" id="PF22740">
    <property type="entry name" value="PapZ_C"/>
    <property type="match status" value="1"/>
</dbReference>
<dbReference type="Pfam" id="PF03668">
    <property type="entry name" value="RapZ-like_N"/>
    <property type="match status" value="1"/>
</dbReference>
<dbReference type="PIRSF" id="PIRSF005052">
    <property type="entry name" value="P-loopkin"/>
    <property type="match status" value="1"/>
</dbReference>
<dbReference type="SUPFAM" id="SSF52540">
    <property type="entry name" value="P-loop containing nucleoside triphosphate hydrolases"/>
    <property type="match status" value="1"/>
</dbReference>
<organism>
    <name type="scientific">Glaesserella parasuis serovar 5 (strain SH0165)</name>
    <name type="common">Haemophilus parasuis</name>
    <dbReference type="NCBI Taxonomy" id="557723"/>
    <lineage>
        <taxon>Bacteria</taxon>
        <taxon>Pseudomonadati</taxon>
        <taxon>Pseudomonadota</taxon>
        <taxon>Gammaproteobacteria</taxon>
        <taxon>Pasteurellales</taxon>
        <taxon>Pasteurellaceae</taxon>
        <taxon>Glaesserella</taxon>
    </lineage>
</organism>
<sequence length="286" mass="32890">MELIIMSGRSGSGKSVALRALEDLGYYCVDNIPLALIPQLTDYLEKLKRSVVVSLDVRNLPEDPDVLEQVLHAFPSHISKTLIFLDCQRKALVRRYSDSRRLHPLSTHDLSLENVIDLENHLLEPLFQHADYIIDTTYFSSHELAEKLRELLNGSSEKELNIIVESFGFKYGIPADADYVFDVRFLPNPHWNLELRPMTGLEKPVIDFLENQSEVHQFISHTCNYLEVWLPLLEQNNRSYLTIAIGCTGGKHRSVFVAEKLARYIESKGKKVRVRHCSLEKHYKTS</sequence>
<proteinExistence type="inferred from homology"/>
<evidence type="ECO:0000255" key="1">
    <source>
        <dbReference type="HAMAP-Rule" id="MF_00636"/>
    </source>
</evidence>
<evidence type="ECO:0000305" key="2"/>
<feature type="chain" id="PRO_0000383249" description="Nucleotide-binding protein HAPS_0087">
    <location>
        <begin position="1"/>
        <end position="286"/>
    </location>
</feature>
<feature type="binding site" evidence="1">
    <location>
        <begin position="8"/>
        <end position="15"/>
    </location>
    <ligand>
        <name>ATP</name>
        <dbReference type="ChEBI" id="CHEBI:30616"/>
    </ligand>
</feature>
<feature type="binding site" evidence="1">
    <location>
        <begin position="56"/>
        <end position="59"/>
    </location>
    <ligand>
        <name>GTP</name>
        <dbReference type="ChEBI" id="CHEBI:37565"/>
    </ligand>
</feature>
<name>Y087_GLAP5</name>